<sequence>MNKQEFYVLIERDEDGIYIGEVPQLKACYSQGETIDELMQNIREVIELCLEEIELESTSEFIGIQKVVV</sequence>
<comment type="similarity">
    <text evidence="1">Belongs to the UPF0150 family.</text>
</comment>
<name>Y1258_SYNY3</name>
<dbReference type="EMBL" id="BA000022">
    <property type="protein sequence ID" value="BAA18757.1"/>
    <property type="molecule type" value="Genomic_DNA"/>
</dbReference>
<dbReference type="PIR" id="S76845">
    <property type="entry name" value="S76845"/>
</dbReference>
<dbReference type="SMR" id="P74641"/>
<dbReference type="IntAct" id="P74641">
    <property type="interactions" value="4"/>
</dbReference>
<dbReference type="STRING" id="1148.gene:10500529"/>
<dbReference type="PaxDb" id="1148-1653847"/>
<dbReference type="EnsemblBacteria" id="BAA18757">
    <property type="protein sequence ID" value="BAA18757"/>
    <property type="gene ID" value="BAA18757"/>
</dbReference>
<dbReference type="KEGG" id="syn:ssr1258"/>
<dbReference type="eggNOG" id="COG1598">
    <property type="taxonomic scope" value="Bacteria"/>
</dbReference>
<dbReference type="InParanoid" id="P74641"/>
<dbReference type="PhylomeDB" id="P74641"/>
<dbReference type="Proteomes" id="UP000001425">
    <property type="component" value="Chromosome"/>
</dbReference>
<dbReference type="GO" id="GO:0006355">
    <property type="term" value="P:regulation of DNA-templated transcription"/>
    <property type="evidence" value="ECO:0000318"/>
    <property type="project" value="GO_Central"/>
</dbReference>
<dbReference type="Gene3D" id="3.30.160.250">
    <property type="match status" value="1"/>
</dbReference>
<dbReference type="InterPro" id="IPR031807">
    <property type="entry name" value="HicB-like"/>
</dbReference>
<dbReference type="InterPro" id="IPR051404">
    <property type="entry name" value="TA_system_antitoxin"/>
</dbReference>
<dbReference type="InterPro" id="IPR035069">
    <property type="entry name" value="TTHA1013/TTHA0281-like"/>
</dbReference>
<dbReference type="PANTHER" id="PTHR34504">
    <property type="entry name" value="ANTITOXIN HICB"/>
    <property type="match status" value="1"/>
</dbReference>
<dbReference type="PANTHER" id="PTHR34504:SF4">
    <property type="entry name" value="ANTITOXIN HICB"/>
    <property type="match status" value="1"/>
</dbReference>
<dbReference type="Pfam" id="PF15919">
    <property type="entry name" value="HicB_lk_antitox"/>
    <property type="match status" value="1"/>
</dbReference>
<dbReference type="SUPFAM" id="SSF143100">
    <property type="entry name" value="TTHA1013/TTHA0281-like"/>
    <property type="match status" value="1"/>
</dbReference>
<organism>
    <name type="scientific">Synechocystis sp. (strain ATCC 27184 / PCC 6803 / Kazusa)</name>
    <dbReference type="NCBI Taxonomy" id="1111708"/>
    <lineage>
        <taxon>Bacteria</taxon>
        <taxon>Bacillati</taxon>
        <taxon>Cyanobacteriota</taxon>
        <taxon>Cyanophyceae</taxon>
        <taxon>Synechococcales</taxon>
        <taxon>Merismopediaceae</taxon>
        <taxon>Synechocystis</taxon>
    </lineage>
</organism>
<reference key="1">
    <citation type="journal article" date="1996" name="DNA Res.">
        <title>Sequence analysis of the genome of the unicellular cyanobacterium Synechocystis sp. strain PCC6803. II. Sequence determination of the entire genome and assignment of potential protein-coding regions.</title>
        <authorList>
            <person name="Kaneko T."/>
            <person name="Sato S."/>
            <person name="Kotani H."/>
            <person name="Tanaka A."/>
            <person name="Asamizu E."/>
            <person name="Nakamura Y."/>
            <person name="Miyajima N."/>
            <person name="Hirosawa M."/>
            <person name="Sugiura M."/>
            <person name="Sasamoto S."/>
            <person name="Kimura T."/>
            <person name="Hosouchi T."/>
            <person name="Matsuno A."/>
            <person name="Muraki A."/>
            <person name="Nakazaki N."/>
            <person name="Naruo K."/>
            <person name="Okumura S."/>
            <person name="Shimpo S."/>
            <person name="Takeuchi C."/>
            <person name="Wada T."/>
            <person name="Watanabe A."/>
            <person name="Yamada M."/>
            <person name="Yasuda M."/>
            <person name="Tabata S."/>
        </authorList>
    </citation>
    <scope>NUCLEOTIDE SEQUENCE [LARGE SCALE GENOMIC DNA]</scope>
    <source>
        <strain>ATCC 27184 / PCC 6803 / Kazusa</strain>
    </source>
</reference>
<gene>
    <name type="ordered locus">ssr1258</name>
</gene>
<feature type="chain" id="PRO_0000157936" description="UPF0150 protein ssr1258">
    <location>
        <begin position="1"/>
        <end position="69"/>
    </location>
</feature>
<accession>P74641</accession>
<keyword id="KW-1185">Reference proteome</keyword>
<proteinExistence type="inferred from homology"/>
<evidence type="ECO:0000305" key="1"/>
<protein>
    <recommendedName>
        <fullName>UPF0150 protein ssr1258</fullName>
    </recommendedName>
</protein>